<reference key="1">
    <citation type="journal article" date="2009" name="PLoS ONE">
        <title>Geographic variation in venom allelic composition and diets of the widespread predatory marine gastropod Conus ebraeus.</title>
        <authorList>
            <person name="Duda T.F. Jr."/>
            <person name="Chang D."/>
            <person name="Lewis B.D."/>
            <person name="Lee T."/>
        </authorList>
    </citation>
    <scope>NUCLEOTIDE SEQUENCE [MRNA]</scope>
    <source>
        <strain>Guam</strain>
        <strain>Okinawa</strain>
        <tissue>Venom duct</tissue>
    </source>
</reference>
<proteinExistence type="evidence at transcript level"/>
<name>O16EA_CONEA</name>
<organism>
    <name type="scientific">Conus ebraeus</name>
    <name type="common">Hebrew cone</name>
    <dbReference type="NCBI Taxonomy" id="89425"/>
    <lineage>
        <taxon>Eukaryota</taxon>
        <taxon>Metazoa</taxon>
        <taxon>Spiralia</taxon>
        <taxon>Lophotrochozoa</taxon>
        <taxon>Mollusca</taxon>
        <taxon>Gastropoda</taxon>
        <taxon>Caenogastropoda</taxon>
        <taxon>Neogastropoda</taxon>
        <taxon>Conoidea</taxon>
        <taxon>Conidae</taxon>
        <taxon>Conus</taxon>
        <taxon>Virroconus</taxon>
    </lineage>
</organism>
<feature type="signal peptide" evidence="2">
    <location>
        <begin position="1" status="less than"/>
        <end position="17"/>
    </location>
</feature>
<feature type="propeptide" id="PRO_0000414636" evidence="1">
    <location>
        <begin position="18"/>
        <end position="41"/>
    </location>
</feature>
<feature type="peptide" id="PRO_0000414637" description="Conotoxin Eb6.14">
    <location>
        <begin position="42"/>
        <end position="69"/>
    </location>
</feature>
<feature type="disulfide bond" evidence="1">
    <location>
        <begin position="43"/>
        <end position="57"/>
    </location>
</feature>
<feature type="disulfide bond" evidence="1">
    <location>
        <begin position="50"/>
        <end position="61"/>
    </location>
</feature>
<feature type="disulfide bond" evidence="1">
    <location>
        <begin position="56"/>
        <end position="68"/>
    </location>
</feature>
<feature type="non-terminal residue">
    <location>
        <position position="1"/>
    </location>
</feature>
<keyword id="KW-1015">Disulfide bond</keyword>
<keyword id="KW-0960">Knottin</keyword>
<keyword id="KW-0964">Secreted</keyword>
<keyword id="KW-0732">Signal</keyword>
<keyword id="KW-0800">Toxin</keyword>
<evidence type="ECO:0000250" key="1"/>
<evidence type="ECO:0000255" key="2"/>
<evidence type="ECO:0000305" key="3"/>
<dbReference type="EMBL" id="FJ804531">
    <property type="protein sequence ID" value="ACU56806.1"/>
    <property type="molecule type" value="mRNA"/>
</dbReference>
<dbReference type="ConoServer" id="3845">
    <property type="toxin name" value="Eb6.14 precursor"/>
</dbReference>
<dbReference type="GO" id="GO:0005576">
    <property type="term" value="C:extracellular region"/>
    <property type="evidence" value="ECO:0007669"/>
    <property type="project" value="UniProtKB-SubCell"/>
</dbReference>
<dbReference type="GO" id="GO:0008200">
    <property type="term" value="F:ion channel inhibitor activity"/>
    <property type="evidence" value="ECO:0007669"/>
    <property type="project" value="InterPro"/>
</dbReference>
<dbReference type="GO" id="GO:0090729">
    <property type="term" value="F:toxin activity"/>
    <property type="evidence" value="ECO:0007669"/>
    <property type="project" value="UniProtKB-KW"/>
</dbReference>
<dbReference type="InterPro" id="IPR004214">
    <property type="entry name" value="Conotoxin"/>
</dbReference>
<dbReference type="Pfam" id="PF02950">
    <property type="entry name" value="Conotoxin"/>
    <property type="match status" value="1"/>
</dbReference>
<sequence length="69" mass="7717">VLIIAVLFLTACQLTTAETYSRGRQKHRARRSTDKNSKWTRECTDSGGACNSHDQCCNEFCSTATRTCI</sequence>
<accession>C7T183</accession>
<protein>
    <recommendedName>
        <fullName>Conotoxin Eb6.14</fullName>
    </recommendedName>
</protein>
<comment type="subcellular location">
    <subcellularLocation>
        <location evidence="1">Secreted</location>
    </subcellularLocation>
</comment>
<comment type="tissue specificity">
    <text>Expressed by the venom duct.</text>
</comment>
<comment type="domain">
    <text evidence="1">The presence of a 'disulfide through disulfide knot' structurally defines this protein as a knottin.</text>
</comment>
<comment type="domain">
    <text>The cysteine framework is VI/VII (C-C-CC-C-C).</text>
</comment>
<comment type="miscellaneous">
    <text>This precursor corresponds to allele E1b. Has not been merged with other alleles since they may differ due to geographic variation (see strains in PubMed:19606224).</text>
</comment>
<comment type="similarity">
    <text evidence="3">Belongs to the conotoxin O1 superfamily.</text>
</comment>
<gene>
    <name type="primary">E1</name>
</gene>